<sequence length="158" mass="16837">MIRIGHGFDVHRFGGEGPIIIGGVKIPYEQGLIAHSDGDVALHALSDALLGAIAAGDIGRHFPDTDDKWKGADSRELLKDVYRRVKAQGYVLGNADVTIIAQAPKMAPYIQAMCAAIAEDLETDLGNINVKATTTEKLGFTGRKEGIACEAVVLLRKA</sequence>
<feature type="chain" id="PRO_1000190722" description="2-C-methyl-D-erythritol 2,4-cyclodiphosphate synthase">
    <location>
        <begin position="1"/>
        <end position="158"/>
    </location>
</feature>
<feature type="binding site" evidence="1">
    <location>
        <begin position="9"/>
        <end position="11"/>
    </location>
    <ligand>
        <name>4-CDP-2-C-methyl-D-erythritol 2-phosphate</name>
        <dbReference type="ChEBI" id="CHEBI:57919"/>
    </ligand>
</feature>
<feature type="binding site" evidence="1">
    <location>
        <position position="9"/>
    </location>
    <ligand>
        <name>a divalent metal cation</name>
        <dbReference type="ChEBI" id="CHEBI:60240"/>
    </ligand>
</feature>
<feature type="binding site" evidence="1">
    <location>
        <position position="11"/>
    </location>
    <ligand>
        <name>a divalent metal cation</name>
        <dbReference type="ChEBI" id="CHEBI:60240"/>
    </ligand>
</feature>
<feature type="binding site" evidence="1">
    <location>
        <begin position="35"/>
        <end position="36"/>
    </location>
    <ligand>
        <name>4-CDP-2-C-methyl-D-erythritol 2-phosphate</name>
        <dbReference type="ChEBI" id="CHEBI:57919"/>
    </ligand>
</feature>
<feature type="binding site" evidence="1">
    <location>
        <position position="43"/>
    </location>
    <ligand>
        <name>a divalent metal cation</name>
        <dbReference type="ChEBI" id="CHEBI:60240"/>
    </ligand>
</feature>
<feature type="binding site" evidence="1">
    <location>
        <begin position="57"/>
        <end position="59"/>
    </location>
    <ligand>
        <name>4-CDP-2-C-methyl-D-erythritol 2-phosphate</name>
        <dbReference type="ChEBI" id="CHEBI:57919"/>
    </ligand>
</feature>
<feature type="binding site" evidence="1">
    <location>
        <begin position="62"/>
        <end position="66"/>
    </location>
    <ligand>
        <name>4-CDP-2-C-methyl-D-erythritol 2-phosphate</name>
        <dbReference type="ChEBI" id="CHEBI:57919"/>
    </ligand>
</feature>
<feature type="binding site" evidence="1">
    <location>
        <begin position="101"/>
        <end position="107"/>
    </location>
    <ligand>
        <name>4-CDP-2-C-methyl-D-erythritol 2-phosphate</name>
        <dbReference type="ChEBI" id="CHEBI:57919"/>
    </ligand>
</feature>
<feature type="binding site" evidence="1">
    <location>
        <begin position="133"/>
        <end position="136"/>
    </location>
    <ligand>
        <name>4-CDP-2-C-methyl-D-erythritol 2-phosphate</name>
        <dbReference type="ChEBI" id="CHEBI:57919"/>
    </ligand>
</feature>
<feature type="binding site" evidence="1">
    <location>
        <position position="140"/>
    </location>
    <ligand>
        <name>4-CDP-2-C-methyl-D-erythritol 2-phosphate</name>
        <dbReference type="ChEBI" id="CHEBI:57919"/>
    </ligand>
</feature>
<feature type="binding site" evidence="1">
    <location>
        <position position="143"/>
    </location>
    <ligand>
        <name>4-CDP-2-C-methyl-D-erythritol 2-phosphate</name>
        <dbReference type="ChEBI" id="CHEBI:57919"/>
    </ligand>
</feature>
<feature type="site" description="Transition state stabilizer" evidence="1">
    <location>
        <position position="35"/>
    </location>
</feature>
<feature type="site" description="Transition state stabilizer" evidence="1">
    <location>
        <position position="134"/>
    </location>
</feature>
<name>ISPF_VIBCM</name>
<protein>
    <recommendedName>
        <fullName evidence="1">2-C-methyl-D-erythritol 2,4-cyclodiphosphate synthase</fullName>
        <shortName evidence="1">MECDP-synthase</shortName>
        <shortName evidence="1">MECPP-synthase</shortName>
        <shortName evidence="1">MECPS</shortName>
        <ecNumber evidence="1">4.6.1.12</ecNumber>
    </recommendedName>
</protein>
<accession>C3LS19</accession>
<dbReference type="EC" id="4.6.1.12" evidence="1"/>
<dbReference type="EMBL" id="CP001233">
    <property type="protein sequence ID" value="ACP04812.1"/>
    <property type="molecule type" value="Genomic_DNA"/>
</dbReference>
<dbReference type="RefSeq" id="WP_000619209.1">
    <property type="nucleotide sequence ID" value="NC_012578.1"/>
</dbReference>
<dbReference type="SMR" id="C3LS19"/>
<dbReference type="KEGG" id="vcm:VCM66_0487"/>
<dbReference type="HOGENOM" id="CLU_084630_2_0_6"/>
<dbReference type="UniPathway" id="UPA00056">
    <property type="reaction ID" value="UER00095"/>
</dbReference>
<dbReference type="Proteomes" id="UP000001217">
    <property type="component" value="Chromosome I"/>
</dbReference>
<dbReference type="GO" id="GO:0008685">
    <property type="term" value="F:2-C-methyl-D-erythritol 2,4-cyclodiphosphate synthase activity"/>
    <property type="evidence" value="ECO:0007669"/>
    <property type="project" value="UniProtKB-UniRule"/>
</dbReference>
<dbReference type="GO" id="GO:0046872">
    <property type="term" value="F:metal ion binding"/>
    <property type="evidence" value="ECO:0007669"/>
    <property type="project" value="UniProtKB-KW"/>
</dbReference>
<dbReference type="GO" id="GO:0019288">
    <property type="term" value="P:isopentenyl diphosphate biosynthetic process, methylerythritol 4-phosphate pathway"/>
    <property type="evidence" value="ECO:0007669"/>
    <property type="project" value="UniProtKB-UniRule"/>
</dbReference>
<dbReference type="GO" id="GO:0016114">
    <property type="term" value="P:terpenoid biosynthetic process"/>
    <property type="evidence" value="ECO:0007669"/>
    <property type="project" value="InterPro"/>
</dbReference>
<dbReference type="CDD" id="cd00554">
    <property type="entry name" value="MECDP_synthase"/>
    <property type="match status" value="1"/>
</dbReference>
<dbReference type="FunFam" id="3.30.1330.50:FF:000001">
    <property type="entry name" value="2-C-methyl-D-erythritol 2,4-cyclodiphosphate synthase"/>
    <property type="match status" value="1"/>
</dbReference>
<dbReference type="Gene3D" id="3.30.1330.50">
    <property type="entry name" value="2-C-methyl-D-erythritol 2,4-cyclodiphosphate synthase"/>
    <property type="match status" value="1"/>
</dbReference>
<dbReference type="HAMAP" id="MF_00107">
    <property type="entry name" value="IspF"/>
    <property type="match status" value="1"/>
</dbReference>
<dbReference type="InterPro" id="IPR003526">
    <property type="entry name" value="MECDP_synthase"/>
</dbReference>
<dbReference type="InterPro" id="IPR020555">
    <property type="entry name" value="MECDP_synthase_CS"/>
</dbReference>
<dbReference type="InterPro" id="IPR036571">
    <property type="entry name" value="MECDP_synthase_sf"/>
</dbReference>
<dbReference type="NCBIfam" id="TIGR00151">
    <property type="entry name" value="ispF"/>
    <property type="match status" value="1"/>
</dbReference>
<dbReference type="PANTHER" id="PTHR43181">
    <property type="entry name" value="2-C-METHYL-D-ERYTHRITOL 2,4-CYCLODIPHOSPHATE SYNTHASE, CHLOROPLASTIC"/>
    <property type="match status" value="1"/>
</dbReference>
<dbReference type="PANTHER" id="PTHR43181:SF1">
    <property type="entry name" value="2-C-METHYL-D-ERYTHRITOL 2,4-CYCLODIPHOSPHATE SYNTHASE, CHLOROPLASTIC"/>
    <property type="match status" value="1"/>
</dbReference>
<dbReference type="Pfam" id="PF02542">
    <property type="entry name" value="YgbB"/>
    <property type="match status" value="1"/>
</dbReference>
<dbReference type="SUPFAM" id="SSF69765">
    <property type="entry name" value="IpsF-like"/>
    <property type="match status" value="1"/>
</dbReference>
<dbReference type="PROSITE" id="PS01350">
    <property type="entry name" value="ISPF"/>
    <property type="match status" value="1"/>
</dbReference>
<comment type="function">
    <text evidence="1">Involved in the biosynthesis of isopentenyl diphosphate (IPP) and dimethylallyl diphosphate (DMAPP), two major building blocks of isoprenoid compounds. Catalyzes the conversion of 4-diphosphocytidyl-2-C-methyl-D-erythritol 2-phosphate (CDP-ME2P) to 2-C-methyl-D-erythritol 2,4-cyclodiphosphate (ME-CPP) with a corresponding release of cytidine 5-monophosphate (CMP).</text>
</comment>
<comment type="catalytic activity">
    <reaction evidence="1">
        <text>4-CDP-2-C-methyl-D-erythritol 2-phosphate = 2-C-methyl-D-erythritol 2,4-cyclic diphosphate + CMP</text>
        <dbReference type="Rhea" id="RHEA:23864"/>
        <dbReference type="ChEBI" id="CHEBI:57919"/>
        <dbReference type="ChEBI" id="CHEBI:58483"/>
        <dbReference type="ChEBI" id="CHEBI:60377"/>
        <dbReference type="EC" id="4.6.1.12"/>
    </reaction>
</comment>
<comment type="cofactor">
    <cofactor evidence="1">
        <name>a divalent metal cation</name>
        <dbReference type="ChEBI" id="CHEBI:60240"/>
    </cofactor>
    <text evidence="1">Binds 1 divalent metal cation per subunit.</text>
</comment>
<comment type="pathway">
    <text evidence="1">Isoprenoid biosynthesis; isopentenyl diphosphate biosynthesis via DXP pathway; isopentenyl diphosphate from 1-deoxy-D-xylulose 5-phosphate: step 4/6.</text>
</comment>
<comment type="subunit">
    <text evidence="1">Homotrimer.</text>
</comment>
<comment type="similarity">
    <text evidence="1">Belongs to the IspF family.</text>
</comment>
<keyword id="KW-0414">Isoprene biosynthesis</keyword>
<keyword id="KW-0456">Lyase</keyword>
<keyword id="KW-0479">Metal-binding</keyword>
<gene>
    <name evidence="1" type="primary">ispF</name>
    <name type="ordered locus">VCM66_0487</name>
</gene>
<evidence type="ECO:0000255" key="1">
    <source>
        <dbReference type="HAMAP-Rule" id="MF_00107"/>
    </source>
</evidence>
<organism>
    <name type="scientific">Vibrio cholerae serotype O1 (strain M66-2)</name>
    <dbReference type="NCBI Taxonomy" id="579112"/>
    <lineage>
        <taxon>Bacteria</taxon>
        <taxon>Pseudomonadati</taxon>
        <taxon>Pseudomonadota</taxon>
        <taxon>Gammaproteobacteria</taxon>
        <taxon>Vibrionales</taxon>
        <taxon>Vibrionaceae</taxon>
        <taxon>Vibrio</taxon>
    </lineage>
</organism>
<reference key="1">
    <citation type="journal article" date="2008" name="PLoS ONE">
        <title>A recalibrated molecular clock and independent origins for the cholera pandemic clones.</title>
        <authorList>
            <person name="Feng L."/>
            <person name="Reeves P.R."/>
            <person name="Lan R."/>
            <person name="Ren Y."/>
            <person name="Gao C."/>
            <person name="Zhou Z."/>
            <person name="Ren Y."/>
            <person name="Cheng J."/>
            <person name="Wang W."/>
            <person name="Wang J."/>
            <person name="Qian W."/>
            <person name="Li D."/>
            <person name="Wang L."/>
        </authorList>
    </citation>
    <scope>NUCLEOTIDE SEQUENCE [LARGE SCALE GENOMIC DNA]</scope>
    <source>
        <strain>M66-2</strain>
    </source>
</reference>
<proteinExistence type="inferred from homology"/>